<evidence type="ECO:0000255" key="1">
    <source>
        <dbReference type="HAMAP-Rule" id="MF_01380"/>
    </source>
</evidence>
<dbReference type="EMBL" id="CP001139">
    <property type="protein sequence ID" value="ACH65673.1"/>
    <property type="molecule type" value="Genomic_DNA"/>
</dbReference>
<dbReference type="RefSeq" id="WP_005420796.1">
    <property type="nucleotide sequence ID" value="NC_011184.1"/>
</dbReference>
<dbReference type="SMR" id="B5FAL7"/>
<dbReference type="GeneID" id="54164844"/>
<dbReference type="KEGG" id="vfm:VFMJ11_2242"/>
<dbReference type="HOGENOM" id="CLU_069054_5_3_6"/>
<dbReference type="Proteomes" id="UP000001857">
    <property type="component" value="Chromosome I"/>
</dbReference>
<dbReference type="GO" id="GO:0005829">
    <property type="term" value="C:cytosol"/>
    <property type="evidence" value="ECO:0007669"/>
    <property type="project" value="TreeGrafter"/>
</dbReference>
<dbReference type="GO" id="GO:0051537">
    <property type="term" value="F:2 iron, 2 sulfur cluster binding"/>
    <property type="evidence" value="ECO:0007669"/>
    <property type="project" value="UniProtKB-ARBA"/>
</dbReference>
<dbReference type="GO" id="GO:0051539">
    <property type="term" value="F:4 iron, 4 sulfur cluster binding"/>
    <property type="evidence" value="ECO:0007669"/>
    <property type="project" value="TreeGrafter"/>
</dbReference>
<dbReference type="GO" id="GO:0005506">
    <property type="term" value="F:iron ion binding"/>
    <property type="evidence" value="ECO:0007669"/>
    <property type="project" value="UniProtKB-UniRule"/>
</dbReference>
<dbReference type="GO" id="GO:0016226">
    <property type="term" value="P:iron-sulfur cluster assembly"/>
    <property type="evidence" value="ECO:0007669"/>
    <property type="project" value="UniProtKB-UniRule"/>
</dbReference>
<dbReference type="FunFam" id="2.60.300.12:FF:000002">
    <property type="entry name" value="Iron-sulfur cluster insertion protein ErpA"/>
    <property type="match status" value="1"/>
</dbReference>
<dbReference type="Gene3D" id="2.60.300.12">
    <property type="entry name" value="HesB-like domain"/>
    <property type="match status" value="1"/>
</dbReference>
<dbReference type="HAMAP" id="MF_01380">
    <property type="entry name" value="Fe_S_insert_ErpA"/>
    <property type="match status" value="1"/>
</dbReference>
<dbReference type="InterPro" id="IPR000361">
    <property type="entry name" value="FeS_biogenesis"/>
</dbReference>
<dbReference type="InterPro" id="IPR016092">
    <property type="entry name" value="FeS_cluster_insertion"/>
</dbReference>
<dbReference type="InterPro" id="IPR017870">
    <property type="entry name" value="FeS_cluster_insertion_CS"/>
</dbReference>
<dbReference type="InterPro" id="IPR023063">
    <property type="entry name" value="FeS_cluster_insertion_RrpA"/>
</dbReference>
<dbReference type="InterPro" id="IPR035903">
    <property type="entry name" value="HesB-like_dom_sf"/>
</dbReference>
<dbReference type="NCBIfam" id="TIGR00049">
    <property type="entry name" value="iron-sulfur cluster assembly accessory protein"/>
    <property type="match status" value="1"/>
</dbReference>
<dbReference type="NCBIfam" id="NF010147">
    <property type="entry name" value="PRK13623.1"/>
    <property type="match status" value="1"/>
</dbReference>
<dbReference type="PANTHER" id="PTHR43011">
    <property type="entry name" value="IRON-SULFUR CLUSTER ASSEMBLY 2 HOMOLOG, MITOCHONDRIAL"/>
    <property type="match status" value="1"/>
</dbReference>
<dbReference type="PANTHER" id="PTHR43011:SF1">
    <property type="entry name" value="IRON-SULFUR CLUSTER ASSEMBLY 2 HOMOLOG, MITOCHONDRIAL"/>
    <property type="match status" value="1"/>
</dbReference>
<dbReference type="Pfam" id="PF01521">
    <property type="entry name" value="Fe-S_biosyn"/>
    <property type="match status" value="1"/>
</dbReference>
<dbReference type="SUPFAM" id="SSF89360">
    <property type="entry name" value="HesB-like domain"/>
    <property type="match status" value="1"/>
</dbReference>
<dbReference type="PROSITE" id="PS01152">
    <property type="entry name" value="HESB"/>
    <property type="match status" value="1"/>
</dbReference>
<organism>
    <name type="scientific">Aliivibrio fischeri (strain MJ11)</name>
    <name type="common">Vibrio fischeri</name>
    <dbReference type="NCBI Taxonomy" id="388396"/>
    <lineage>
        <taxon>Bacteria</taxon>
        <taxon>Pseudomonadati</taxon>
        <taxon>Pseudomonadota</taxon>
        <taxon>Gammaproteobacteria</taxon>
        <taxon>Vibrionales</taxon>
        <taxon>Vibrionaceae</taxon>
        <taxon>Aliivibrio</taxon>
    </lineage>
</organism>
<protein>
    <recommendedName>
        <fullName evidence="1">Iron-sulfur cluster insertion protein ErpA</fullName>
    </recommendedName>
</protein>
<comment type="function">
    <text evidence="1">Required for insertion of 4Fe-4S clusters for at least IspG.</text>
</comment>
<comment type="cofactor">
    <cofactor evidence="1">
        <name>iron-sulfur cluster</name>
        <dbReference type="ChEBI" id="CHEBI:30408"/>
    </cofactor>
    <text evidence="1">Binds 1 iron-sulfur cluster per subunit.</text>
</comment>
<comment type="subunit">
    <text evidence="1">Homodimer.</text>
</comment>
<comment type="similarity">
    <text evidence="1">Belongs to the HesB/IscA family.</text>
</comment>
<reference key="1">
    <citation type="submission" date="2008-08" db="EMBL/GenBank/DDBJ databases">
        <title>Complete sequence of Vibrio fischeri strain MJ11.</title>
        <authorList>
            <person name="Mandel M.J."/>
            <person name="Stabb E.V."/>
            <person name="Ruby E.G."/>
            <person name="Ferriera S."/>
            <person name="Johnson J."/>
            <person name="Kravitz S."/>
            <person name="Beeson K."/>
            <person name="Sutton G."/>
            <person name="Rogers Y.-H."/>
            <person name="Friedman R."/>
            <person name="Frazier M."/>
            <person name="Venter J.C."/>
        </authorList>
    </citation>
    <scope>NUCLEOTIDE SEQUENCE [LARGE SCALE GENOMIC DNA]</scope>
    <source>
        <strain>MJ11</strain>
    </source>
</reference>
<sequence length="113" mass="12064">MSDVSVPLTFSDVAAAKVKTLIAEEENPNLKLRVYITGGGCSGFQYGFTFDEDVNEGDMTIENDGVTLVVDPMSLQYLIGGKVDYTEGLEGSRFFIDNPNATTTCGCGASFSV</sequence>
<accession>B5FAL7</accession>
<keyword id="KW-0408">Iron</keyword>
<keyword id="KW-0411">Iron-sulfur</keyword>
<keyword id="KW-0479">Metal-binding</keyword>
<name>ERPA_ALIFM</name>
<feature type="chain" id="PRO_1000144941" description="Iron-sulfur cluster insertion protein ErpA">
    <location>
        <begin position="1"/>
        <end position="113"/>
    </location>
</feature>
<feature type="binding site" evidence="1">
    <location>
        <position position="41"/>
    </location>
    <ligand>
        <name>iron-sulfur cluster</name>
        <dbReference type="ChEBI" id="CHEBI:30408"/>
    </ligand>
</feature>
<feature type="binding site" evidence="1">
    <location>
        <position position="105"/>
    </location>
    <ligand>
        <name>iron-sulfur cluster</name>
        <dbReference type="ChEBI" id="CHEBI:30408"/>
    </ligand>
</feature>
<feature type="binding site" evidence="1">
    <location>
        <position position="107"/>
    </location>
    <ligand>
        <name>iron-sulfur cluster</name>
        <dbReference type="ChEBI" id="CHEBI:30408"/>
    </ligand>
</feature>
<proteinExistence type="inferred from homology"/>
<gene>
    <name evidence="1" type="primary">erpA</name>
    <name type="ordered locus">VFMJ11_2242</name>
</gene>